<sequence length="107" mass="11144">MTTLLAYALAALAEIAGCFAIWAWLRLGRSPLWLGPGLASLILFAVLLTRVESAAAGRAYAAYGGVYVAASLLWLWAAEGQRPDRWDLGGAALCLAGSAVVLLGPRG</sequence>
<name>Y5886_METS4</name>
<keyword id="KW-0997">Cell inner membrane</keyword>
<keyword id="KW-1003">Cell membrane</keyword>
<keyword id="KW-0472">Membrane</keyword>
<keyword id="KW-0812">Transmembrane</keyword>
<keyword id="KW-1133">Transmembrane helix</keyword>
<reference key="1">
    <citation type="submission" date="2008-02" db="EMBL/GenBank/DDBJ databases">
        <title>Complete sequence of chromosome of Methylobacterium sp. 4-46.</title>
        <authorList>
            <consortium name="US DOE Joint Genome Institute"/>
            <person name="Copeland A."/>
            <person name="Lucas S."/>
            <person name="Lapidus A."/>
            <person name="Glavina del Rio T."/>
            <person name="Dalin E."/>
            <person name="Tice H."/>
            <person name="Bruce D."/>
            <person name="Goodwin L."/>
            <person name="Pitluck S."/>
            <person name="Chertkov O."/>
            <person name="Brettin T."/>
            <person name="Detter J.C."/>
            <person name="Han C."/>
            <person name="Kuske C.R."/>
            <person name="Schmutz J."/>
            <person name="Larimer F."/>
            <person name="Land M."/>
            <person name="Hauser L."/>
            <person name="Kyrpides N."/>
            <person name="Ivanova N."/>
            <person name="Marx C.J."/>
            <person name="Richardson P."/>
        </authorList>
    </citation>
    <scope>NUCLEOTIDE SEQUENCE [LARGE SCALE GENOMIC DNA]</scope>
    <source>
        <strain>4-46</strain>
    </source>
</reference>
<organism>
    <name type="scientific">Methylobacterium sp. (strain 4-46)</name>
    <dbReference type="NCBI Taxonomy" id="426117"/>
    <lineage>
        <taxon>Bacteria</taxon>
        <taxon>Pseudomonadati</taxon>
        <taxon>Pseudomonadota</taxon>
        <taxon>Alphaproteobacteria</taxon>
        <taxon>Hyphomicrobiales</taxon>
        <taxon>Methylobacteriaceae</taxon>
        <taxon>Methylobacterium</taxon>
    </lineage>
</organism>
<gene>
    <name type="ordered locus">M446_5886</name>
</gene>
<comment type="subcellular location">
    <subcellularLocation>
        <location evidence="1">Cell inner membrane</location>
        <topology evidence="1">Multi-pass membrane protein</topology>
    </subcellularLocation>
</comment>
<comment type="similarity">
    <text evidence="1">Belongs to the UPF0060 family.</text>
</comment>
<protein>
    <recommendedName>
        <fullName evidence="1">UPF0060 membrane protein M446_5886</fullName>
    </recommendedName>
</protein>
<feature type="chain" id="PRO_1000089247" description="UPF0060 membrane protein M446_5886">
    <location>
        <begin position="1"/>
        <end position="107"/>
    </location>
</feature>
<feature type="transmembrane region" description="Helical" evidence="1">
    <location>
        <begin position="4"/>
        <end position="24"/>
    </location>
</feature>
<feature type="transmembrane region" description="Helical" evidence="1">
    <location>
        <begin position="31"/>
        <end position="51"/>
    </location>
</feature>
<feature type="transmembrane region" description="Helical" evidence="1">
    <location>
        <begin position="59"/>
        <end position="79"/>
    </location>
</feature>
<feature type="transmembrane region" description="Helical" evidence="1">
    <location>
        <begin position="85"/>
        <end position="105"/>
    </location>
</feature>
<evidence type="ECO:0000255" key="1">
    <source>
        <dbReference type="HAMAP-Rule" id="MF_00010"/>
    </source>
</evidence>
<accession>B0UHJ2</accession>
<dbReference type="EMBL" id="CP000943">
    <property type="protein sequence ID" value="ACA20173.1"/>
    <property type="molecule type" value="Genomic_DNA"/>
</dbReference>
<dbReference type="RefSeq" id="WP_012335551.1">
    <property type="nucleotide sequence ID" value="NC_010511.1"/>
</dbReference>
<dbReference type="SMR" id="B0UHJ2"/>
<dbReference type="STRING" id="426117.M446_5886"/>
<dbReference type="KEGG" id="met:M446_5886"/>
<dbReference type="eggNOG" id="COG1742">
    <property type="taxonomic scope" value="Bacteria"/>
</dbReference>
<dbReference type="HOGENOM" id="CLU_117653_1_0_5"/>
<dbReference type="GO" id="GO:0005886">
    <property type="term" value="C:plasma membrane"/>
    <property type="evidence" value="ECO:0007669"/>
    <property type="project" value="UniProtKB-SubCell"/>
</dbReference>
<dbReference type="HAMAP" id="MF_00010">
    <property type="entry name" value="UPF0060"/>
    <property type="match status" value="1"/>
</dbReference>
<dbReference type="InterPro" id="IPR003844">
    <property type="entry name" value="UPF0060"/>
</dbReference>
<dbReference type="NCBIfam" id="NF002586">
    <property type="entry name" value="PRK02237.1"/>
    <property type="match status" value="1"/>
</dbReference>
<dbReference type="PANTHER" id="PTHR36116">
    <property type="entry name" value="UPF0060 MEMBRANE PROTEIN YNFA"/>
    <property type="match status" value="1"/>
</dbReference>
<dbReference type="PANTHER" id="PTHR36116:SF1">
    <property type="entry name" value="UPF0060 MEMBRANE PROTEIN YNFA"/>
    <property type="match status" value="1"/>
</dbReference>
<dbReference type="Pfam" id="PF02694">
    <property type="entry name" value="UPF0060"/>
    <property type="match status" value="1"/>
</dbReference>
<dbReference type="SUPFAM" id="SSF103481">
    <property type="entry name" value="Multidrug resistance efflux transporter EmrE"/>
    <property type="match status" value="1"/>
</dbReference>
<proteinExistence type="inferred from homology"/>